<reference evidence="6" key="1">
    <citation type="journal article" date="2007" name="Nature">
        <title>Evolution of genes and genomes on the Drosophila phylogeny.</title>
        <authorList>
            <consortium name="Drosophila 12 genomes consortium"/>
        </authorList>
    </citation>
    <scope>NUCLEOTIDE SEQUENCE [LARGE SCALE GENOMIC DNA]</scope>
    <source>
        <strain evidence="6">Tucson 14024-0371.13</strain>
    </source>
</reference>
<feature type="transit peptide" description="Mitochondrion" evidence="3">
    <location>
        <begin position="1"/>
        <end position="30"/>
    </location>
</feature>
<feature type="propeptide" id="PRO_0000382181" evidence="3">
    <location>
        <begin position="31"/>
        <end position="78"/>
    </location>
</feature>
<feature type="chain" id="PRO_0000382182" description="Serine protease HTRA2, mitochondrial" evidence="2">
    <location>
        <begin position="79"/>
        <end position="426"/>
    </location>
</feature>
<feature type="transmembrane region" description="Helical" evidence="3">
    <location>
        <begin position="68"/>
        <end position="86"/>
    </location>
</feature>
<feature type="domain" description="PDZ" evidence="4">
    <location>
        <begin position="329"/>
        <end position="414"/>
    </location>
</feature>
<feature type="region of interest" description="Disordered" evidence="5">
    <location>
        <begin position="30"/>
        <end position="59"/>
    </location>
</feature>
<feature type="region of interest" description="Serine protease" evidence="3">
    <location>
        <begin position="143"/>
        <end position="306"/>
    </location>
</feature>
<feature type="short sequence motif" description="IAP-binding" evidence="3">
    <location>
        <begin position="79"/>
        <end position="82"/>
    </location>
</feature>
<feature type="compositionally biased region" description="Low complexity" evidence="5">
    <location>
        <begin position="42"/>
        <end position="54"/>
    </location>
</feature>
<feature type="active site" description="Charge relay system" evidence="1">
    <location>
        <position position="161"/>
    </location>
</feature>
<feature type="active site" description="Charge relay system" evidence="1">
    <location>
        <position position="193"/>
    </location>
</feature>
<feature type="active site" description="Charge relay system" evidence="2">
    <location>
        <position position="270"/>
    </location>
</feature>
<name>HTRA2_DROAN</name>
<keyword id="KW-0053">Apoptosis</keyword>
<keyword id="KW-0378">Hydrolase</keyword>
<keyword id="KW-0472">Membrane</keyword>
<keyword id="KW-0496">Mitochondrion</keyword>
<keyword id="KW-0645">Protease</keyword>
<keyword id="KW-1185">Reference proteome</keyword>
<keyword id="KW-0720">Serine protease</keyword>
<keyword id="KW-0809">Transit peptide</keyword>
<keyword id="KW-0812">Transmembrane</keyword>
<keyword id="KW-1133">Transmembrane helix</keyword>
<keyword id="KW-0865">Zymogen</keyword>
<accession>B3LVG7</accession>
<comment type="function">
    <text evidence="2">Serine protease that shows proteolytic activity against a non-specific substrate beta-casein. Promotes or induces cell death either by direct binding to and inhibition of BIRC proteins (also called inhibitor of apoptosis proteins, IAPs), leading to an increase in caspase activity, or by a BIRC inhibition-independent, caspase-independent and serine protease activity-dependent mechanism. Can antagonize antiapoptotic activity of th/Diap1 by directly inducing the degradation of th/Diap1 (By similarity).</text>
</comment>
<comment type="catalytic activity">
    <reaction>
        <text>Cleavage of non-polar aliphatic amino-acids at the P1 position, with a preference for Val, Ile and Met. At the P2 and P3 positions, Arg is selected most strongly with a secondary preference for other hydrophilic residues.</text>
        <dbReference type="EC" id="3.4.21.108"/>
    </reaction>
</comment>
<comment type="subunit">
    <text evidence="2">Interacts with th/DIAP1 (via BIR 2 domain).</text>
</comment>
<comment type="subcellular location">
    <subcellularLocation>
        <location evidence="2">Mitochondrion intermembrane space</location>
        <topology evidence="3">Single-pass membrane protein</topology>
    </subcellularLocation>
    <subcellularLocation>
        <location evidence="2">Mitochondrion membrane</location>
        <topology evidence="3">Single-pass membrane protein</topology>
    </subcellularLocation>
    <text evidence="2">Predominantly present in the intermembrane space. Released into the cytosol following apoptotic stimuli, such as UV treatment. The extramitochondrial protein does not diffuse throughout the cytosol but stays near the mitochondria.</text>
</comment>
<comment type="similarity">
    <text evidence="3">Belongs to the peptidase S1C family.</text>
</comment>
<gene>
    <name evidence="2" type="primary">HtrA2</name>
    <name type="ORF">GF17480</name>
</gene>
<organism>
    <name type="scientific">Drosophila ananassae</name>
    <name type="common">Fruit fly</name>
    <dbReference type="NCBI Taxonomy" id="7217"/>
    <lineage>
        <taxon>Eukaryota</taxon>
        <taxon>Metazoa</taxon>
        <taxon>Ecdysozoa</taxon>
        <taxon>Arthropoda</taxon>
        <taxon>Hexapoda</taxon>
        <taxon>Insecta</taxon>
        <taxon>Pterygota</taxon>
        <taxon>Neoptera</taxon>
        <taxon>Endopterygota</taxon>
        <taxon>Diptera</taxon>
        <taxon>Brachycera</taxon>
        <taxon>Muscomorpha</taxon>
        <taxon>Ephydroidea</taxon>
        <taxon>Drosophilidae</taxon>
        <taxon>Drosophila</taxon>
        <taxon>Sophophora</taxon>
    </lineage>
</organism>
<protein>
    <recommendedName>
        <fullName evidence="2">Serine protease HTRA2, mitochondrial</fullName>
        <ecNumber>3.4.21.108</ecNumber>
    </recommendedName>
    <alternativeName>
        <fullName evidence="2">High temperature requirement protein A2</fullName>
    </alternativeName>
</protein>
<proteinExistence type="inferred from homology"/>
<sequence>MALRGSHRLDDFIRRCSALTLFHSQAPSRRVSHCGRDRRQQQDPPGQGRQEQQESGGGHWSRFGWRSLIRFFVPFSLGAVASSLVIKREELTPTITAKAMSGRRRDFNFIADVVAGCADSVVYIEIKDTRHFDYFSGQPITASNGSGFIIEQNGLILTNAHVVINKPHTMVQVRLSDGRTFPATIEDVDQTSDLATLRIQVSNLSVMRLGKSSTLRSGEWVVALGSPLALSNTVTAGVISSTQRASQELGLRNRDINYLQTDAAITFGNSGGPLVNLDGEAIGVNSMKVTAGISFAIPIDYVKVFLERAAERRKKGAAYKTGYPVKRYMGITMLTLTPDILFELKSRSQNMPSNLTHGVLVWKVIVGSPAHSGGLQPGDIVTHINKKEIKNSSDVYDALADNSKHLDIVILRGVKQMHVTITPEDP</sequence>
<evidence type="ECO:0000250" key="1">
    <source>
        <dbReference type="UniProtKB" id="O43464"/>
    </source>
</evidence>
<evidence type="ECO:0000250" key="2">
    <source>
        <dbReference type="UniProtKB" id="Q9VFJ3"/>
    </source>
</evidence>
<evidence type="ECO:0000255" key="3"/>
<evidence type="ECO:0000255" key="4">
    <source>
        <dbReference type="PROSITE-ProRule" id="PRU00143"/>
    </source>
</evidence>
<evidence type="ECO:0000256" key="5">
    <source>
        <dbReference type="SAM" id="MobiDB-lite"/>
    </source>
</evidence>
<evidence type="ECO:0000312" key="6">
    <source>
        <dbReference type="EMBL" id="EDV41495.1"/>
    </source>
</evidence>
<dbReference type="EC" id="3.4.21.108"/>
<dbReference type="EMBL" id="CH902617">
    <property type="protein sequence ID" value="EDV41495.1"/>
    <property type="molecule type" value="Genomic_DNA"/>
</dbReference>
<dbReference type="SMR" id="B3LVG7"/>
<dbReference type="FunCoup" id="B3LVG7">
    <property type="interactions" value="1139"/>
</dbReference>
<dbReference type="STRING" id="7217.B3LVG7"/>
<dbReference type="EnsemblMetazoa" id="FBtr0122180">
    <property type="protein sequence ID" value="FBpp0120672"/>
    <property type="gene ID" value="FBgn0094498"/>
</dbReference>
<dbReference type="EnsemblMetazoa" id="XM_001952877.4">
    <property type="protein sequence ID" value="XP_001952912.1"/>
    <property type="gene ID" value="LOC6500264"/>
</dbReference>
<dbReference type="GeneID" id="6500264"/>
<dbReference type="KEGG" id="dan:6500264"/>
<dbReference type="CTD" id="27429"/>
<dbReference type="eggNOG" id="KOG1320">
    <property type="taxonomic scope" value="Eukaryota"/>
</dbReference>
<dbReference type="HOGENOM" id="CLU_020120_6_0_1"/>
<dbReference type="InParanoid" id="B3LVG7"/>
<dbReference type="OMA" id="IMSPEGY"/>
<dbReference type="OrthoDB" id="4217619at2759"/>
<dbReference type="PhylomeDB" id="B3LVG7"/>
<dbReference type="Proteomes" id="UP000007801">
    <property type="component" value="Unassembled WGS sequence"/>
</dbReference>
<dbReference type="GO" id="GO:0005829">
    <property type="term" value="C:cytosol"/>
    <property type="evidence" value="ECO:0007669"/>
    <property type="project" value="EnsemblMetazoa"/>
</dbReference>
<dbReference type="GO" id="GO:0005758">
    <property type="term" value="C:mitochondrial intermembrane space"/>
    <property type="evidence" value="ECO:0007669"/>
    <property type="project" value="UniProtKB-SubCell"/>
</dbReference>
<dbReference type="GO" id="GO:0031966">
    <property type="term" value="C:mitochondrial membrane"/>
    <property type="evidence" value="ECO:0007669"/>
    <property type="project" value="UniProtKB-SubCell"/>
</dbReference>
<dbReference type="GO" id="GO:0016006">
    <property type="term" value="C:Nebenkern"/>
    <property type="evidence" value="ECO:0007669"/>
    <property type="project" value="EnsemblMetazoa"/>
</dbReference>
<dbReference type="GO" id="GO:0004252">
    <property type="term" value="F:serine-type endopeptidase activity"/>
    <property type="evidence" value="ECO:0007669"/>
    <property type="project" value="EnsemblMetazoa"/>
</dbReference>
<dbReference type="GO" id="GO:0006915">
    <property type="term" value="P:apoptotic process"/>
    <property type="evidence" value="ECO:0007669"/>
    <property type="project" value="UniProtKB-KW"/>
</dbReference>
<dbReference type="GO" id="GO:0035234">
    <property type="term" value="P:ectopic germ cell programmed cell death"/>
    <property type="evidence" value="ECO:0007669"/>
    <property type="project" value="EnsemblMetazoa"/>
</dbReference>
<dbReference type="GO" id="GO:0007005">
    <property type="term" value="P:mitochondrion organization"/>
    <property type="evidence" value="ECO:0007669"/>
    <property type="project" value="EnsemblMetazoa"/>
</dbReference>
<dbReference type="GO" id="GO:0043065">
    <property type="term" value="P:positive regulation of apoptotic process"/>
    <property type="evidence" value="ECO:0007669"/>
    <property type="project" value="EnsemblMetazoa"/>
</dbReference>
<dbReference type="GO" id="GO:0006508">
    <property type="term" value="P:proteolysis"/>
    <property type="evidence" value="ECO:0007669"/>
    <property type="project" value="UniProtKB-KW"/>
</dbReference>
<dbReference type="GO" id="GO:0007283">
    <property type="term" value="P:spermatogenesis"/>
    <property type="evidence" value="ECO:0007669"/>
    <property type="project" value="EnsemblMetazoa"/>
</dbReference>
<dbReference type="CDD" id="cd06785">
    <property type="entry name" value="cpPDZ_HtrA-like"/>
    <property type="match status" value="1"/>
</dbReference>
<dbReference type="FunFam" id="2.40.10.120:FF:000004">
    <property type="entry name" value="Serine protease HTRA2, mitochondrial"/>
    <property type="match status" value="1"/>
</dbReference>
<dbReference type="Gene3D" id="2.30.42.10">
    <property type="match status" value="1"/>
</dbReference>
<dbReference type="Gene3D" id="2.40.10.120">
    <property type="match status" value="1"/>
</dbReference>
<dbReference type="InterPro" id="IPR001478">
    <property type="entry name" value="PDZ"/>
</dbReference>
<dbReference type="InterPro" id="IPR041489">
    <property type="entry name" value="PDZ_6"/>
</dbReference>
<dbReference type="InterPro" id="IPR036034">
    <property type="entry name" value="PDZ_sf"/>
</dbReference>
<dbReference type="InterPro" id="IPR009003">
    <property type="entry name" value="Peptidase_S1_PA"/>
</dbReference>
<dbReference type="InterPro" id="IPR001940">
    <property type="entry name" value="Peptidase_S1C"/>
</dbReference>
<dbReference type="PANTHER" id="PTHR22939">
    <property type="entry name" value="SERINE PROTEASE FAMILY S1C HTRA-RELATED"/>
    <property type="match status" value="1"/>
</dbReference>
<dbReference type="PANTHER" id="PTHR22939:SF129">
    <property type="entry name" value="SERINE PROTEASE HTRA2, MITOCHONDRIAL"/>
    <property type="match status" value="1"/>
</dbReference>
<dbReference type="Pfam" id="PF17820">
    <property type="entry name" value="PDZ_6"/>
    <property type="match status" value="1"/>
</dbReference>
<dbReference type="Pfam" id="PF13365">
    <property type="entry name" value="Trypsin_2"/>
    <property type="match status" value="1"/>
</dbReference>
<dbReference type="PRINTS" id="PR00834">
    <property type="entry name" value="PROTEASES2C"/>
</dbReference>
<dbReference type="SMART" id="SM00228">
    <property type="entry name" value="PDZ"/>
    <property type="match status" value="1"/>
</dbReference>
<dbReference type="SUPFAM" id="SSF50156">
    <property type="entry name" value="PDZ domain-like"/>
    <property type="match status" value="1"/>
</dbReference>
<dbReference type="SUPFAM" id="SSF50494">
    <property type="entry name" value="Trypsin-like serine proteases"/>
    <property type="match status" value="1"/>
</dbReference>
<dbReference type="PROSITE" id="PS50106">
    <property type="entry name" value="PDZ"/>
    <property type="match status" value="1"/>
</dbReference>